<sequence length="442" mass="49594">MSKTYHFIGIKGSGMSALALMLHQMGHKVQGSDVEKYYFTQRGLEQAGITILPFSEDNITPDMELIVGNAFRENNKEVAYALRHQIPFKRYHDFLGDFMKSFISFAVAGAHGKTSTTGLLSHVLKNITDTSYLIGDGTGRGSANAQYFVFESDEYERHFMPYHPEYSIITNIDFDHPDYFTGIADVRNAFNDYAKQVKKALFVYGEDDELKKIEAPAPIYYYGFEEGNDFIAYDITRTTNGSDFKVKHQGEVIGQFHVPAYGKHNILNATAVIANLFVAGIDMALVADHLKTFSGVKRRFTEKIINDTIIIDDFAHHPTEIVATIDAARQKYPSKEIVAIFQPHTFTRTIALLEDFACALNEADSVYLAQIYGSAREVDKGEVKVEDLAAKIIKPSQVVTVENVSPLLDHDNAVYVFMGAGDIQLYEHSFEELLANLTKNNQ</sequence>
<dbReference type="EC" id="6.3.2.8" evidence="1"/>
<dbReference type="EMBL" id="CP000262">
    <property type="protein sequence ID" value="ABF37235.1"/>
    <property type="molecule type" value="Genomic_DNA"/>
</dbReference>
<dbReference type="SMR" id="Q1J8C6"/>
<dbReference type="KEGG" id="spi:MGAS10750_Spy0285"/>
<dbReference type="HOGENOM" id="CLU_028104_1_0_9"/>
<dbReference type="UniPathway" id="UPA00219"/>
<dbReference type="Proteomes" id="UP000002434">
    <property type="component" value="Chromosome"/>
</dbReference>
<dbReference type="GO" id="GO:0005737">
    <property type="term" value="C:cytoplasm"/>
    <property type="evidence" value="ECO:0007669"/>
    <property type="project" value="UniProtKB-SubCell"/>
</dbReference>
<dbReference type="GO" id="GO:0005524">
    <property type="term" value="F:ATP binding"/>
    <property type="evidence" value="ECO:0007669"/>
    <property type="project" value="UniProtKB-UniRule"/>
</dbReference>
<dbReference type="GO" id="GO:0008763">
    <property type="term" value="F:UDP-N-acetylmuramate-L-alanine ligase activity"/>
    <property type="evidence" value="ECO:0007669"/>
    <property type="project" value="UniProtKB-UniRule"/>
</dbReference>
<dbReference type="GO" id="GO:0051301">
    <property type="term" value="P:cell division"/>
    <property type="evidence" value="ECO:0007669"/>
    <property type="project" value="UniProtKB-KW"/>
</dbReference>
<dbReference type="GO" id="GO:0071555">
    <property type="term" value="P:cell wall organization"/>
    <property type="evidence" value="ECO:0007669"/>
    <property type="project" value="UniProtKB-KW"/>
</dbReference>
<dbReference type="GO" id="GO:0009252">
    <property type="term" value="P:peptidoglycan biosynthetic process"/>
    <property type="evidence" value="ECO:0007669"/>
    <property type="project" value="UniProtKB-UniRule"/>
</dbReference>
<dbReference type="GO" id="GO:0008360">
    <property type="term" value="P:regulation of cell shape"/>
    <property type="evidence" value="ECO:0007669"/>
    <property type="project" value="UniProtKB-KW"/>
</dbReference>
<dbReference type="Gene3D" id="3.90.190.20">
    <property type="entry name" value="Mur ligase, C-terminal domain"/>
    <property type="match status" value="1"/>
</dbReference>
<dbReference type="Gene3D" id="3.40.1190.10">
    <property type="entry name" value="Mur-like, catalytic domain"/>
    <property type="match status" value="1"/>
</dbReference>
<dbReference type="Gene3D" id="3.40.50.720">
    <property type="entry name" value="NAD(P)-binding Rossmann-like Domain"/>
    <property type="match status" value="1"/>
</dbReference>
<dbReference type="HAMAP" id="MF_00046">
    <property type="entry name" value="MurC"/>
    <property type="match status" value="1"/>
</dbReference>
<dbReference type="InterPro" id="IPR036565">
    <property type="entry name" value="Mur-like_cat_sf"/>
</dbReference>
<dbReference type="InterPro" id="IPR004101">
    <property type="entry name" value="Mur_ligase_C"/>
</dbReference>
<dbReference type="InterPro" id="IPR036615">
    <property type="entry name" value="Mur_ligase_C_dom_sf"/>
</dbReference>
<dbReference type="InterPro" id="IPR013221">
    <property type="entry name" value="Mur_ligase_cen"/>
</dbReference>
<dbReference type="InterPro" id="IPR000713">
    <property type="entry name" value="Mur_ligase_N"/>
</dbReference>
<dbReference type="InterPro" id="IPR050061">
    <property type="entry name" value="MurCDEF_pg_biosynth"/>
</dbReference>
<dbReference type="InterPro" id="IPR005758">
    <property type="entry name" value="UDP-N-AcMur_Ala_ligase_MurC"/>
</dbReference>
<dbReference type="NCBIfam" id="TIGR01082">
    <property type="entry name" value="murC"/>
    <property type="match status" value="1"/>
</dbReference>
<dbReference type="PANTHER" id="PTHR43445:SF3">
    <property type="entry name" value="UDP-N-ACETYLMURAMATE--L-ALANINE LIGASE"/>
    <property type="match status" value="1"/>
</dbReference>
<dbReference type="PANTHER" id="PTHR43445">
    <property type="entry name" value="UDP-N-ACETYLMURAMATE--L-ALANINE LIGASE-RELATED"/>
    <property type="match status" value="1"/>
</dbReference>
<dbReference type="Pfam" id="PF01225">
    <property type="entry name" value="Mur_ligase"/>
    <property type="match status" value="1"/>
</dbReference>
<dbReference type="Pfam" id="PF02875">
    <property type="entry name" value="Mur_ligase_C"/>
    <property type="match status" value="1"/>
</dbReference>
<dbReference type="Pfam" id="PF08245">
    <property type="entry name" value="Mur_ligase_M"/>
    <property type="match status" value="1"/>
</dbReference>
<dbReference type="SUPFAM" id="SSF51984">
    <property type="entry name" value="MurCD N-terminal domain"/>
    <property type="match status" value="1"/>
</dbReference>
<dbReference type="SUPFAM" id="SSF53623">
    <property type="entry name" value="MurD-like peptide ligases, catalytic domain"/>
    <property type="match status" value="1"/>
</dbReference>
<dbReference type="SUPFAM" id="SSF53244">
    <property type="entry name" value="MurD-like peptide ligases, peptide-binding domain"/>
    <property type="match status" value="1"/>
</dbReference>
<name>MURC_STRPF</name>
<organism>
    <name type="scientific">Streptococcus pyogenes serotype M4 (strain MGAS10750)</name>
    <dbReference type="NCBI Taxonomy" id="370554"/>
    <lineage>
        <taxon>Bacteria</taxon>
        <taxon>Bacillati</taxon>
        <taxon>Bacillota</taxon>
        <taxon>Bacilli</taxon>
        <taxon>Lactobacillales</taxon>
        <taxon>Streptococcaceae</taxon>
        <taxon>Streptococcus</taxon>
    </lineage>
</organism>
<keyword id="KW-0067">ATP-binding</keyword>
<keyword id="KW-0131">Cell cycle</keyword>
<keyword id="KW-0132">Cell division</keyword>
<keyword id="KW-0133">Cell shape</keyword>
<keyword id="KW-0961">Cell wall biogenesis/degradation</keyword>
<keyword id="KW-0963">Cytoplasm</keyword>
<keyword id="KW-0436">Ligase</keyword>
<keyword id="KW-0547">Nucleotide-binding</keyword>
<keyword id="KW-0573">Peptidoglycan synthesis</keyword>
<protein>
    <recommendedName>
        <fullName evidence="1">UDP-N-acetylmuramate--L-alanine ligase</fullName>
        <ecNumber evidence="1">6.3.2.8</ecNumber>
    </recommendedName>
    <alternativeName>
        <fullName evidence="1">UDP-N-acetylmuramoyl-L-alanine synthetase</fullName>
    </alternativeName>
</protein>
<gene>
    <name evidence="1" type="primary">murC</name>
    <name type="ordered locus">MGAS10750_Spy0285</name>
</gene>
<evidence type="ECO:0000255" key="1">
    <source>
        <dbReference type="HAMAP-Rule" id="MF_00046"/>
    </source>
</evidence>
<proteinExistence type="inferred from homology"/>
<feature type="chain" id="PRO_1000004424" description="UDP-N-acetylmuramate--L-alanine ligase">
    <location>
        <begin position="1"/>
        <end position="442"/>
    </location>
</feature>
<feature type="binding site" evidence="1">
    <location>
        <begin position="109"/>
        <end position="115"/>
    </location>
    <ligand>
        <name>ATP</name>
        <dbReference type="ChEBI" id="CHEBI:30616"/>
    </ligand>
</feature>
<comment type="function">
    <text evidence="1">Cell wall formation.</text>
</comment>
<comment type="catalytic activity">
    <reaction evidence="1">
        <text>UDP-N-acetyl-alpha-D-muramate + L-alanine + ATP = UDP-N-acetyl-alpha-D-muramoyl-L-alanine + ADP + phosphate + H(+)</text>
        <dbReference type="Rhea" id="RHEA:23372"/>
        <dbReference type="ChEBI" id="CHEBI:15378"/>
        <dbReference type="ChEBI" id="CHEBI:30616"/>
        <dbReference type="ChEBI" id="CHEBI:43474"/>
        <dbReference type="ChEBI" id="CHEBI:57972"/>
        <dbReference type="ChEBI" id="CHEBI:70757"/>
        <dbReference type="ChEBI" id="CHEBI:83898"/>
        <dbReference type="ChEBI" id="CHEBI:456216"/>
        <dbReference type="EC" id="6.3.2.8"/>
    </reaction>
</comment>
<comment type="pathway">
    <text evidence="1">Cell wall biogenesis; peptidoglycan biosynthesis.</text>
</comment>
<comment type="subcellular location">
    <subcellularLocation>
        <location evidence="1">Cytoplasm</location>
    </subcellularLocation>
</comment>
<comment type="similarity">
    <text evidence="1">Belongs to the MurCDEF family.</text>
</comment>
<accession>Q1J8C6</accession>
<reference key="1">
    <citation type="journal article" date="2006" name="Proc. Natl. Acad. Sci. U.S.A.">
        <title>Molecular genetic anatomy of inter- and intraserotype variation in the human bacterial pathogen group A Streptococcus.</title>
        <authorList>
            <person name="Beres S.B."/>
            <person name="Richter E.W."/>
            <person name="Nagiec M.J."/>
            <person name="Sumby P."/>
            <person name="Porcella S.F."/>
            <person name="DeLeo F.R."/>
            <person name="Musser J.M."/>
        </authorList>
    </citation>
    <scope>NUCLEOTIDE SEQUENCE [LARGE SCALE GENOMIC DNA]</scope>
    <source>
        <strain>MGAS10750</strain>
    </source>
</reference>